<accession>A5GAW9</accession>
<organism>
    <name type="scientific">Geotalea uraniireducens (strain Rf4)</name>
    <name type="common">Geobacter uraniireducens</name>
    <dbReference type="NCBI Taxonomy" id="351605"/>
    <lineage>
        <taxon>Bacteria</taxon>
        <taxon>Pseudomonadati</taxon>
        <taxon>Thermodesulfobacteriota</taxon>
        <taxon>Desulfuromonadia</taxon>
        <taxon>Geobacterales</taxon>
        <taxon>Geobacteraceae</taxon>
        <taxon>Geotalea</taxon>
    </lineage>
</organism>
<proteinExistence type="inferred from homology"/>
<reference key="1">
    <citation type="submission" date="2007-05" db="EMBL/GenBank/DDBJ databases">
        <title>Complete sequence of Geobacter uraniireducens Rf4.</title>
        <authorList>
            <consortium name="US DOE Joint Genome Institute"/>
            <person name="Copeland A."/>
            <person name="Lucas S."/>
            <person name="Lapidus A."/>
            <person name="Barry K."/>
            <person name="Detter J.C."/>
            <person name="Glavina del Rio T."/>
            <person name="Hammon N."/>
            <person name="Israni S."/>
            <person name="Dalin E."/>
            <person name="Tice H."/>
            <person name="Pitluck S."/>
            <person name="Chertkov O."/>
            <person name="Brettin T."/>
            <person name="Bruce D."/>
            <person name="Han C."/>
            <person name="Schmutz J."/>
            <person name="Larimer F."/>
            <person name="Land M."/>
            <person name="Hauser L."/>
            <person name="Kyrpides N."/>
            <person name="Mikhailova N."/>
            <person name="Shelobolina E."/>
            <person name="Aklujkar M."/>
            <person name="Lovley D."/>
            <person name="Richardson P."/>
        </authorList>
    </citation>
    <scope>NUCLEOTIDE SEQUENCE [LARGE SCALE GENOMIC DNA]</scope>
    <source>
        <strain>ATCC BAA-1134 / JCM 13001 / Rf4</strain>
    </source>
</reference>
<name>RS19_GEOUR</name>
<comment type="function">
    <text evidence="1">Protein S19 forms a complex with S13 that binds strongly to the 16S ribosomal RNA.</text>
</comment>
<comment type="similarity">
    <text evidence="1">Belongs to the universal ribosomal protein uS19 family.</text>
</comment>
<dbReference type="EMBL" id="CP000698">
    <property type="protein sequence ID" value="ABQ25277.1"/>
    <property type="molecule type" value="Genomic_DNA"/>
</dbReference>
<dbReference type="RefSeq" id="WP_011938000.1">
    <property type="nucleotide sequence ID" value="NC_009483.1"/>
</dbReference>
<dbReference type="SMR" id="A5GAW9"/>
<dbReference type="STRING" id="351605.Gura_1071"/>
<dbReference type="KEGG" id="gur:Gura_1071"/>
<dbReference type="HOGENOM" id="CLU_144911_0_1_7"/>
<dbReference type="OrthoDB" id="9797833at2"/>
<dbReference type="Proteomes" id="UP000006695">
    <property type="component" value="Chromosome"/>
</dbReference>
<dbReference type="GO" id="GO:0005737">
    <property type="term" value="C:cytoplasm"/>
    <property type="evidence" value="ECO:0007669"/>
    <property type="project" value="UniProtKB-ARBA"/>
</dbReference>
<dbReference type="GO" id="GO:0015935">
    <property type="term" value="C:small ribosomal subunit"/>
    <property type="evidence" value="ECO:0007669"/>
    <property type="project" value="InterPro"/>
</dbReference>
<dbReference type="GO" id="GO:0019843">
    <property type="term" value="F:rRNA binding"/>
    <property type="evidence" value="ECO:0007669"/>
    <property type="project" value="UniProtKB-UniRule"/>
</dbReference>
<dbReference type="GO" id="GO:0003735">
    <property type="term" value="F:structural constituent of ribosome"/>
    <property type="evidence" value="ECO:0007669"/>
    <property type="project" value="InterPro"/>
</dbReference>
<dbReference type="GO" id="GO:0000028">
    <property type="term" value="P:ribosomal small subunit assembly"/>
    <property type="evidence" value="ECO:0007669"/>
    <property type="project" value="TreeGrafter"/>
</dbReference>
<dbReference type="GO" id="GO:0006412">
    <property type="term" value="P:translation"/>
    <property type="evidence" value="ECO:0007669"/>
    <property type="project" value="UniProtKB-UniRule"/>
</dbReference>
<dbReference type="FunFam" id="3.30.860.10:FF:000001">
    <property type="entry name" value="30S ribosomal protein S19"/>
    <property type="match status" value="1"/>
</dbReference>
<dbReference type="Gene3D" id="3.30.860.10">
    <property type="entry name" value="30s Ribosomal Protein S19, Chain A"/>
    <property type="match status" value="1"/>
</dbReference>
<dbReference type="HAMAP" id="MF_00531">
    <property type="entry name" value="Ribosomal_uS19"/>
    <property type="match status" value="1"/>
</dbReference>
<dbReference type="InterPro" id="IPR002222">
    <property type="entry name" value="Ribosomal_uS19"/>
</dbReference>
<dbReference type="InterPro" id="IPR005732">
    <property type="entry name" value="Ribosomal_uS19_bac-type"/>
</dbReference>
<dbReference type="InterPro" id="IPR023575">
    <property type="entry name" value="Ribosomal_uS19_SF"/>
</dbReference>
<dbReference type="NCBIfam" id="TIGR01050">
    <property type="entry name" value="rpsS_bact"/>
    <property type="match status" value="1"/>
</dbReference>
<dbReference type="PANTHER" id="PTHR11880">
    <property type="entry name" value="RIBOSOMAL PROTEIN S19P FAMILY MEMBER"/>
    <property type="match status" value="1"/>
</dbReference>
<dbReference type="PANTHER" id="PTHR11880:SF8">
    <property type="entry name" value="SMALL RIBOSOMAL SUBUNIT PROTEIN US19M"/>
    <property type="match status" value="1"/>
</dbReference>
<dbReference type="Pfam" id="PF00203">
    <property type="entry name" value="Ribosomal_S19"/>
    <property type="match status" value="1"/>
</dbReference>
<dbReference type="PIRSF" id="PIRSF002144">
    <property type="entry name" value="Ribosomal_S19"/>
    <property type="match status" value="1"/>
</dbReference>
<dbReference type="PRINTS" id="PR00975">
    <property type="entry name" value="RIBOSOMALS19"/>
</dbReference>
<dbReference type="SUPFAM" id="SSF54570">
    <property type="entry name" value="Ribosomal protein S19"/>
    <property type="match status" value="1"/>
</dbReference>
<keyword id="KW-1185">Reference proteome</keyword>
<keyword id="KW-0687">Ribonucleoprotein</keyword>
<keyword id="KW-0689">Ribosomal protein</keyword>
<keyword id="KW-0694">RNA-binding</keyword>
<keyword id="KW-0699">rRNA-binding</keyword>
<protein>
    <recommendedName>
        <fullName evidence="1">Small ribosomal subunit protein uS19</fullName>
    </recommendedName>
    <alternativeName>
        <fullName evidence="2">30S ribosomal protein S19</fullName>
    </alternativeName>
</protein>
<evidence type="ECO:0000255" key="1">
    <source>
        <dbReference type="HAMAP-Rule" id="MF_00531"/>
    </source>
</evidence>
<evidence type="ECO:0000305" key="2"/>
<gene>
    <name evidence="1" type="primary">rpsS</name>
    <name type="ordered locus">Gura_1071</name>
</gene>
<feature type="chain" id="PRO_1000081773" description="Small ribosomal subunit protein uS19">
    <location>
        <begin position="1"/>
        <end position="93"/>
    </location>
</feature>
<sequence>MARSIKKGPFVDTHLQAKVQAEGPSSKKVIKTWSRRSTITPDFIGLTFAVHNGRKFIPVFVTENMVGHKMGEFAPTRTFFGHAADKKSKLKKK</sequence>